<comment type="function">
    <text evidence="1 6">Involved in the planar cell polarity (PCP) pathway that is essential for the polarization of epithelial cells during morphogenetic processes, including gastrulation and neurulation (By similarity). PCP is maintained by two molecular modules, the global and the core modules, PRICKLE3 being part of the core module (By similarity). Distinct complexes of the core module segregate to opposite sides of the cell, where they interact with the opposite complex in the neighboring cell at or near the adherents junctions (By similarity). Involved in the organization of the basal body (By similarity). Involved in cilia growth and positioning (By similarity). Required for proper assembly, stability, and function of mitochondrial membrane ATP synthase (mitochondrial complex V) (PubMed:32516135).</text>
</comment>
<comment type="subunit">
    <text evidence="1 2">Interacts with VANGL2 via its C-terminus (By similarity). The VANGL2-dependent membrane recruitment of PRICKLE3 is a prerequisite for its polarization (By similarity). Interacts with WTIP. WTIP is involved in the recruitment of PRICKLE3 to the basal body (By similarity). Interacts with MT-ATP8, a component of the mitochondrial complex V (By similarity).</text>
</comment>
<comment type="subcellular location">
    <subcellularLocation>
        <location evidence="1">Cytoplasm</location>
    </subcellularLocation>
    <subcellularLocation>
        <location evidence="1">Cell membrane</location>
        <topology evidence="1">Peripheral membrane protein</topology>
        <orientation evidence="1">Cytoplasmic side</orientation>
    </subcellularLocation>
    <subcellularLocation>
        <location evidence="6">Mitochondrion</location>
    </subcellularLocation>
    <text evidence="1">Recruited by VANGL2 to anterior cell borders. This polarity is controlled by Wnt proteins (By similarity). WTIP is involved in the recruitment of PRICKLE3 to the basal body (By similarity).</text>
</comment>
<comment type="tissue specificity">
    <text evidence="6">Widely expressed.</text>
</comment>
<comment type="disruption phenotype">
    <text evidence="6">Prickle3 knockdown results in reduced respiratory complex V activity, altered complex V assembly, and abnormal mitochondrial morphology observed in the retina. Mutant mice exhibit degeneration of retinal ganglion cells, fewer retinal neurofilaments than wild-type mice, abnormalities of the retinal vasculature, and significantly reduced retinal function.</text>
</comment>
<comment type="similarity">
    <text evidence="7">Belongs to the prickle / espinas / testin family.</text>
</comment>
<protein>
    <recommendedName>
        <fullName evidence="2">Prickle planar cell polarity protein 3</fullName>
    </recommendedName>
    <alternativeName>
        <fullName>LIM domain only protein 6</fullName>
        <shortName>LMO-6</shortName>
    </alternativeName>
    <alternativeName>
        <fullName>Prickle-like protein 3</fullName>
        <shortName evidence="7">Pk3</shortName>
    </alternativeName>
    <alternativeName>
        <fullName>Triple LIM domain protein 6</fullName>
    </alternativeName>
</protein>
<name>PRIC3_MOUSE</name>
<evidence type="ECO:0000250" key="1">
    <source>
        <dbReference type="UniProtKB" id="A8WH69"/>
    </source>
</evidence>
<evidence type="ECO:0000250" key="2">
    <source>
        <dbReference type="UniProtKB" id="O43900"/>
    </source>
</evidence>
<evidence type="ECO:0000255" key="3">
    <source>
        <dbReference type="PROSITE-ProRule" id="PRU00125"/>
    </source>
</evidence>
<evidence type="ECO:0000255" key="4">
    <source>
        <dbReference type="PROSITE-ProRule" id="PRU00636"/>
    </source>
</evidence>
<evidence type="ECO:0000256" key="5">
    <source>
        <dbReference type="SAM" id="MobiDB-lite"/>
    </source>
</evidence>
<evidence type="ECO:0000269" key="6">
    <source>
    </source>
</evidence>
<evidence type="ECO:0000305" key="7"/>
<evidence type="ECO:0000312" key="8">
    <source>
        <dbReference type="MGI" id="MGI:1859635"/>
    </source>
</evidence>
<evidence type="ECO:0007744" key="9">
    <source>
    </source>
</evidence>
<reference key="1">
    <citation type="journal article" date="2005" name="Science">
        <title>The transcriptional landscape of the mammalian genome.</title>
        <authorList>
            <person name="Carninci P."/>
            <person name="Kasukawa T."/>
            <person name="Katayama S."/>
            <person name="Gough J."/>
            <person name="Frith M.C."/>
            <person name="Maeda N."/>
            <person name="Oyama R."/>
            <person name="Ravasi T."/>
            <person name="Lenhard B."/>
            <person name="Wells C."/>
            <person name="Kodzius R."/>
            <person name="Shimokawa K."/>
            <person name="Bajic V.B."/>
            <person name="Brenner S.E."/>
            <person name="Batalov S."/>
            <person name="Forrest A.R."/>
            <person name="Zavolan M."/>
            <person name="Davis M.J."/>
            <person name="Wilming L.G."/>
            <person name="Aidinis V."/>
            <person name="Allen J.E."/>
            <person name="Ambesi-Impiombato A."/>
            <person name="Apweiler R."/>
            <person name="Aturaliya R.N."/>
            <person name="Bailey T.L."/>
            <person name="Bansal M."/>
            <person name="Baxter L."/>
            <person name="Beisel K.W."/>
            <person name="Bersano T."/>
            <person name="Bono H."/>
            <person name="Chalk A.M."/>
            <person name="Chiu K.P."/>
            <person name="Choudhary V."/>
            <person name="Christoffels A."/>
            <person name="Clutterbuck D.R."/>
            <person name="Crowe M.L."/>
            <person name="Dalla E."/>
            <person name="Dalrymple B.P."/>
            <person name="de Bono B."/>
            <person name="Della Gatta G."/>
            <person name="di Bernardo D."/>
            <person name="Down T."/>
            <person name="Engstrom P."/>
            <person name="Fagiolini M."/>
            <person name="Faulkner G."/>
            <person name="Fletcher C.F."/>
            <person name="Fukushima T."/>
            <person name="Furuno M."/>
            <person name="Futaki S."/>
            <person name="Gariboldi M."/>
            <person name="Georgii-Hemming P."/>
            <person name="Gingeras T.R."/>
            <person name="Gojobori T."/>
            <person name="Green R.E."/>
            <person name="Gustincich S."/>
            <person name="Harbers M."/>
            <person name="Hayashi Y."/>
            <person name="Hensch T.K."/>
            <person name="Hirokawa N."/>
            <person name="Hill D."/>
            <person name="Huminiecki L."/>
            <person name="Iacono M."/>
            <person name="Ikeo K."/>
            <person name="Iwama A."/>
            <person name="Ishikawa T."/>
            <person name="Jakt M."/>
            <person name="Kanapin A."/>
            <person name="Katoh M."/>
            <person name="Kawasawa Y."/>
            <person name="Kelso J."/>
            <person name="Kitamura H."/>
            <person name="Kitano H."/>
            <person name="Kollias G."/>
            <person name="Krishnan S.P."/>
            <person name="Kruger A."/>
            <person name="Kummerfeld S.K."/>
            <person name="Kurochkin I.V."/>
            <person name="Lareau L.F."/>
            <person name="Lazarevic D."/>
            <person name="Lipovich L."/>
            <person name="Liu J."/>
            <person name="Liuni S."/>
            <person name="McWilliam S."/>
            <person name="Madan Babu M."/>
            <person name="Madera M."/>
            <person name="Marchionni L."/>
            <person name="Matsuda H."/>
            <person name="Matsuzawa S."/>
            <person name="Miki H."/>
            <person name="Mignone F."/>
            <person name="Miyake S."/>
            <person name="Morris K."/>
            <person name="Mottagui-Tabar S."/>
            <person name="Mulder N."/>
            <person name="Nakano N."/>
            <person name="Nakauchi H."/>
            <person name="Ng P."/>
            <person name="Nilsson R."/>
            <person name="Nishiguchi S."/>
            <person name="Nishikawa S."/>
            <person name="Nori F."/>
            <person name="Ohara O."/>
            <person name="Okazaki Y."/>
            <person name="Orlando V."/>
            <person name="Pang K.C."/>
            <person name="Pavan W.J."/>
            <person name="Pavesi G."/>
            <person name="Pesole G."/>
            <person name="Petrovsky N."/>
            <person name="Piazza S."/>
            <person name="Reed J."/>
            <person name="Reid J.F."/>
            <person name="Ring B.Z."/>
            <person name="Ringwald M."/>
            <person name="Rost B."/>
            <person name="Ruan Y."/>
            <person name="Salzberg S.L."/>
            <person name="Sandelin A."/>
            <person name="Schneider C."/>
            <person name="Schoenbach C."/>
            <person name="Sekiguchi K."/>
            <person name="Semple C.A."/>
            <person name="Seno S."/>
            <person name="Sessa L."/>
            <person name="Sheng Y."/>
            <person name="Shibata Y."/>
            <person name="Shimada H."/>
            <person name="Shimada K."/>
            <person name="Silva D."/>
            <person name="Sinclair B."/>
            <person name="Sperling S."/>
            <person name="Stupka E."/>
            <person name="Sugiura K."/>
            <person name="Sultana R."/>
            <person name="Takenaka Y."/>
            <person name="Taki K."/>
            <person name="Tammoja K."/>
            <person name="Tan S.L."/>
            <person name="Tang S."/>
            <person name="Taylor M.S."/>
            <person name="Tegner J."/>
            <person name="Teichmann S.A."/>
            <person name="Ueda H.R."/>
            <person name="van Nimwegen E."/>
            <person name="Verardo R."/>
            <person name="Wei C.L."/>
            <person name="Yagi K."/>
            <person name="Yamanishi H."/>
            <person name="Zabarovsky E."/>
            <person name="Zhu S."/>
            <person name="Zimmer A."/>
            <person name="Hide W."/>
            <person name="Bult C."/>
            <person name="Grimmond S.M."/>
            <person name="Teasdale R.D."/>
            <person name="Liu E.T."/>
            <person name="Brusic V."/>
            <person name="Quackenbush J."/>
            <person name="Wahlestedt C."/>
            <person name="Mattick J.S."/>
            <person name="Hume D.A."/>
            <person name="Kai C."/>
            <person name="Sasaki D."/>
            <person name="Tomaru Y."/>
            <person name="Fukuda S."/>
            <person name="Kanamori-Katayama M."/>
            <person name="Suzuki M."/>
            <person name="Aoki J."/>
            <person name="Arakawa T."/>
            <person name="Iida J."/>
            <person name="Imamura K."/>
            <person name="Itoh M."/>
            <person name="Kato T."/>
            <person name="Kawaji H."/>
            <person name="Kawagashira N."/>
            <person name="Kawashima T."/>
            <person name="Kojima M."/>
            <person name="Kondo S."/>
            <person name="Konno H."/>
            <person name="Nakano K."/>
            <person name="Ninomiya N."/>
            <person name="Nishio T."/>
            <person name="Okada M."/>
            <person name="Plessy C."/>
            <person name="Shibata K."/>
            <person name="Shiraki T."/>
            <person name="Suzuki S."/>
            <person name="Tagami M."/>
            <person name="Waki K."/>
            <person name="Watahiki A."/>
            <person name="Okamura-Oho Y."/>
            <person name="Suzuki H."/>
            <person name="Kawai J."/>
            <person name="Hayashizaki Y."/>
        </authorList>
    </citation>
    <scope>NUCLEOTIDE SEQUENCE [LARGE SCALE MRNA]</scope>
    <source>
        <strain>C57BL/6J</strain>
        <tissue>Skin</tissue>
    </source>
</reference>
<reference key="2">
    <citation type="journal article" date="2009" name="PLoS Biol.">
        <title>Lineage-specific biology revealed by a finished genome assembly of the mouse.</title>
        <authorList>
            <person name="Church D.M."/>
            <person name="Goodstadt L."/>
            <person name="Hillier L.W."/>
            <person name="Zody M.C."/>
            <person name="Goldstein S."/>
            <person name="She X."/>
            <person name="Bult C.J."/>
            <person name="Agarwala R."/>
            <person name="Cherry J.L."/>
            <person name="DiCuccio M."/>
            <person name="Hlavina W."/>
            <person name="Kapustin Y."/>
            <person name="Meric P."/>
            <person name="Maglott D."/>
            <person name="Birtle Z."/>
            <person name="Marques A.C."/>
            <person name="Graves T."/>
            <person name="Zhou S."/>
            <person name="Teague B."/>
            <person name="Potamousis K."/>
            <person name="Churas C."/>
            <person name="Place M."/>
            <person name="Herschleb J."/>
            <person name="Runnheim R."/>
            <person name="Forrest D."/>
            <person name="Amos-Landgraf J."/>
            <person name="Schwartz D.C."/>
            <person name="Cheng Z."/>
            <person name="Lindblad-Toh K."/>
            <person name="Eichler E.E."/>
            <person name="Ponting C.P."/>
        </authorList>
    </citation>
    <scope>NUCLEOTIDE SEQUENCE [LARGE SCALE GENOMIC DNA]</scope>
    <source>
        <strain>C57BL/6J</strain>
    </source>
</reference>
<reference key="3">
    <citation type="journal article" date="2004" name="Genome Res.">
        <title>The status, quality, and expansion of the NIH full-length cDNA project: the Mammalian Gene Collection (MGC).</title>
        <authorList>
            <consortium name="The MGC Project Team"/>
        </authorList>
    </citation>
    <scope>NUCLEOTIDE SEQUENCE [LARGE SCALE MRNA]</scope>
    <source>
        <strain>FVB/N</strain>
        <tissue>Mammary tumor</tissue>
    </source>
</reference>
<reference key="4">
    <citation type="journal article" date="2010" name="Cell">
        <title>A tissue-specific atlas of mouse protein phosphorylation and expression.</title>
        <authorList>
            <person name="Huttlin E.L."/>
            <person name="Jedrychowski M.P."/>
            <person name="Elias J.E."/>
            <person name="Goswami T."/>
            <person name="Rad R."/>
            <person name="Beausoleil S.A."/>
            <person name="Villen J."/>
            <person name="Haas W."/>
            <person name="Sowa M.E."/>
            <person name="Gygi S.P."/>
        </authorList>
    </citation>
    <scope>PHOSPHORYLATION [LARGE SCALE ANALYSIS] AT SER-475</scope>
    <scope>IDENTIFICATION BY MASS SPECTROMETRY [LARGE SCALE ANALYSIS]</scope>
    <source>
        <tissue>Spleen</tissue>
    </source>
</reference>
<reference key="5">
    <citation type="journal article" date="2020" name="J. Clin. Invest.">
        <title>PRICKLE3 linked to ATPase biogenesis manifested Leber's hereditary optic neuropathy.</title>
        <authorList>
            <person name="Yu J."/>
            <person name="Liang X."/>
            <person name="Ji Y."/>
            <person name="Ai C."/>
            <person name="Liu J."/>
            <person name="Zhu L."/>
            <person name="Nie Z."/>
            <person name="Jin X."/>
            <person name="Wang C."/>
            <person name="Zhang J."/>
            <person name="Zhao F."/>
            <person name="Mei S."/>
            <person name="Zhao X."/>
            <person name="Zhou X."/>
            <person name="Zhang M."/>
            <person name="Wang M."/>
            <person name="Huang T."/>
            <person name="Jiang P."/>
            <person name="Guan M.X."/>
        </authorList>
    </citation>
    <scope>TISSUE SPECIFICITY</scope>
    <scope>SUBCELLULAR LOCATION</scope>
    <scope>DISRUPTION PHENOTYPE</scope>
    <scope>FUNCTION</scope>
</reference>
<accession>Q80VL3</accession>
<accession>B1AVA9</accession>
<accession>Q8CAY9</accession>
<proteinExistence type="evidence at protein level"/>
<gene>
    <name evidence="8" type="primary">Prickle3</name>
    <name type="synonym">Lmo6</name>
</gene>
<organism>
    <name type="scientific">Mus musculus</name>
    <name type="common">Mouse</name>
    <dbReference type="NCBI Taxonomy" id="10090"/>
    <lineage>
        <taxon>Eukaryota</taxon>
        <taxon>Metazoa</taxon>
        <taxon>Chordata</taxon>
        <taxon>Craniata</taxon>
        <taxon>Vertebrata</taxon>
        <taxon>Euteleostomi</taxon>
        <taxon>Mammalia</taxon>
        <taxon>Eutheria</taxon>
        <taxon>Euarchontoglires</taxon>
        <taxon>Glires</taxon>
        <taxon>Rodentia</taxon>
        <taxon>Myomorpha</taxon>
        <taxon>Muroidea</taxon>
        <taxon>Muridae</taxon>
        <taxon>Murinae</taxon>
        <taxon>Mus</taxon>
        <taxon>Mus</taxon>
    </lineage>
</organism>
<dbReference type="EMBL" id="AK037217">
    <property type="protein sequence ID" value="BAC29758.1"/>
    <property type="molecule type" value="mRNA"/>
</dbReference>
<dbReference type="EMBL" id="AL672231">
    <property type="status" value="NOT_ANNOTATED_CDS"/>
    <property type="molecule type" value="Genomic_DNA"/>
</dbReference>
<dbReference type="EMBL" id="BC049258">
    <property type="protein sequence ID" value="AAH49258.1"/>
    <property type="molecule type" value="mRNA"/>
</dbReference>
<dbReference type="CCDS" id="CCDS72329.1"/>
<dbReference type="RefSeq" id="NP_001277553.1">
    <property type="nucleotide sequence ID" value="NM_001290624.2"/>
</dbReference>
<dbReference type="SMR" id="Q80VL3"/>
<dbReference type="FunCoup" id="Q80VL3">
    <property type="interactions" value="817"/>
</dbReference>
<dbReference type="STRING" id="10090.ENSMUSP00000033485"/>
<dbReference type="iPTMnet" id="Q80VL3"/>
<dbReference type="PhosphoSitePlus" id="Q80VL3"/>
<dbReference type="PaxDb" id="10090-ENSMUSP00000127892"/>
<dbReference type="ProteomicsDB" id="291561"/>
<dbReference type="Antibodypedia" id="404">
    <property type="antibodies" value="116 antibodies from 26 providers"/>
</dbReference>
<dbReference type="DNASU" id="54630"/>
<dbReference type="Ensembl" id="ENSMUST00000033485.14">
    <property type="protein sequence ID" value="ENSMUSP00000033485.8"/>
    <property type="gene ID" value="ENSMUSG00000031145.16"/>
</dbReference>
<dbReference type="GeneID" id="54630"/>
<dbReference type="KEGG" id="mmu:54630"/>
<dbReference type="UCSC" id="uc009slu.2">
    <property type="organism name" value="mouse"/>
</dbReference>
<dbReference type="AGR" id="MGI:1859635"/>
<dbReference type="CTD" id="4007"/>
<dbReference type="MGI" id="MGI:1859635">
    <property type="gene designation" value="Prickle3"/>
</dbReference>
<dbReference type="VEuPathDB" id="HostDB:ENSMUSG00000031145"/>
<dbReference type="eggNOG" id="KOG1704">
    <property type="taxonomic scope" value="Eukaryota"/>
</dbReference>
<dbReference type="GeneTree" id="ENSGT00940000153629"/>
<dbReference type="HOGENOM" id="CLU_008937_8_1_1"/>
<dbReference type="InParanoid" id="Q80VL3"/>
<dbReference type="OMA" id="GRHRCDL"/>
<dbReference type="OrthoDB" id="10069167at2759"/>
<dbReference type="PhylomeDB" id="Q80VL3"/>
<dbReference type="BioGRID-ORCS" id="54630">
    <property type="hits" value="1 hit in 77 CRISPR screens"/>
</dbReference>
<dbReference type="ChiTaRS" id="Prickle3">
    <property type="organism name" value="mouse"/>
</dbReference>
<dbReference type="PRO" id="PR:Q80VL3"/>
<dbReference type="Proteomes" id="UP000000589">
    <property type="component" value="Chromosome X"/>
</dbReference>
<dbReference type="RNAct" id="Q80VL3">
    <property type="molecule type" value="protein"/>
</dbReference>
<dbReference type="Bgee" id="ENSMUSG00000031145">
    <property type="expression patterns" value="Expressed in ascending aorta and 222 other cell types or tissues"/>
</dbReference>
<dbReference type="ExpressionAtlas" id="Q80VL3">
    <property type="expression patterns" value="baseline and differential"/>
</dbReference>
<dbReference type="GO" id="GO:0005739">
    <property type="term" value="C:mitochondrion"/>
    <property type="evidence" value="ECO:0000314"/>
    <property type="project" value="UniProtKB"/>
</dbReference>
<dbReference type="GO" id="GO:0005886">
    <property type="term" value="C:plasma membrane"/>
    <property type="evidence" value="ECO:0007669"/>
    <property type="project" value="UniProtKB-SubCell"/>
</dbReference>
<dbReference type="GO" id="GO:0008270">
    <property type="term" value="F:zinc ion binding"/>
    <property type="evidence" value="ECO:0007669"/>
    <property type="project" value="InterPro"/>
</dbReference>
<dbReference type="GO" id="GO:0030030">
    <property type="term" value="P:cell projection organization"/>
    <property type="evidence" value="ECO:0007669"/>
    <property type="project" value="UniProtKB-KW"/>
</dbReference>
<dbReference type="CDD" id="cd09415">
    <property type="entry name" value="LIM1_Prickle"/>
    <property type="match status" value="1"/>
</dbReference>
<dbReference type="CDD" id="cd09418">
    <property type="entry name" value="LIM2_Prickle"/>
    <property type="match status" value="1"/>
</dbReference>
<dbReference type="CDD" id="cd09420">
    <property type="entry name" value="LIM3_Prickle"/>
    <property type="match status" value="1"/>
</dbReference>
<dbReference type="CDD" id="cd09827">
    <property type="entry name" value="PET_Prickle"/>
    <property type="match status" value="1"/>
</dbReference>
<dbReference type="FunFam" id="2.10.110.10:FF:000022">
    <property type="entry name" value="prickle-like protein 2 isoform X1"/>
    <property type="match status" value="1"/>
</dbReference>
<dbReference type="FunFam" id="2.10.110.10:FF:000035">
    <property type="entry name" value="prickle-like protein 2 isoform X1"/>
    <property type="match status" value="1"/>
</dbReference>
<dbReference type="FunFam" id="2.10.110.10:FF:000005">
    <property type="entry name" value="Testin isoform 1"/>
    <property type="match status" value="1"/>
</dbReference>
<dbReference type="Gene3D" id="2.10.110.10">
    <property type="entry name" value="Cysteine Rich Protein"/>
    <property type="match status" value="3"/>
</dbReference>
<dbReference type="InterPro" id="IPR033725">
    <property type="entry name" value="LIM1_prickle"/>
</dbReference>
<dbReference type="InterPro" id="IPR033726">
    <property type="entry name" value="LIM2_prickle"/>
</dbReference>
<dbReference type="InterPro" id="IPR033727">
    <property type="entry name" value="LIM3_prickle"/>
</dbReference>
<dbReference type="InterPro" id="IPR010442">
    <property type="entry name" value="PET_domain"/>
</dbReference>
<dbReference type="InterPro" id="IPR033723">
    <property type="entry name" value="PET_prickle"/>
</dbReference>
<dbReference type="InterPro" id="IPR047120">
    <property type="entry name" value="Pk/Esn/Tes"/>
</dbReference>
<dbReference type="InterPro" id="IPR001781">
    <property type="entry name" value="Znf_LIM"/>
</dbReference>
<dbReference type="PANTHER" id="PTHR24211">
    <property type="entry name" value="LIM DOMAIN-CONTAINING PROTEIN"/>
    <property type="match status" value="1"/>
</dbReference>
<dbReference type="PANTHER" id="PTHR24211:SF19">
    <property type="entry name" value="PRICKLE PLANAR CELL POLARITY PROTEIN 3"/>
    <property type="match status" value="1"/>
</dbReference>
<dbReference type="Pfam" id="PF00412">
    <property type="entry name" value="LIM"/>
    <property type="match status" value="3"/>
</dbReference>
<dbReference type="Pfam" id="PF06297">
    <property type="entry name" value="PET"/>
    <property type="match status" value="1"/>
</dbReference>
<dbReference type="SMART" id="SM00132">
    <property type="entry name" value="LIM"/>
    <property type="match status" value="3"/>
</dbReference>
<dbReference type="SUPFAM" id="SSF57716">
    <property type="entry name" value="Glucocorticoid receptor-like (DNA-binding domain)"/>
    <property type="match status" value="2"/>
</dbReference>
<dbReference type="PROSITE" id="PS00478">
    <property type="entry name" value="LIM_DOMAIN_1"/>
    <property type="match status" value="2"/>
</dbReference>
<dbReference type="PROSITE" id="PS50023">
    <property type="entry name" value="LIM_DOMAIN_2"/>
    <property type="match status" value="3"/>
</dbReference>
<dbReference type="PROSITE" id="PS51303">
    <property type="entry name" value="PET"/>
    <property type="match status" value="1"/>
</dbReference>
<keyword id="KW-1003">Cell membrane</keyword>
<keyword id="KW-0970">Cilium biogenesis/degradation</keyword>
<keyword id="KW-0963">Cytoplasm</keyword>
<keyword id="KW-0217">Developmental protein</keyword>
<keyword id="KW-0440">LIM domain</keyword>
<keyword id="KW-0472">Membrane</keyword>
<keyword id="KW-0479">Metal-binding</keyword>
<keyword id="KW-0496">Mitochondrion</keyword>
<keyword id="KW-0597">Phosphoprotein</keyword>
<keyword id="KW-1185">Reference proteome</keyword>
<keyword id="KW-0677">Repeat</keyword>
<keyword id="KW-0862">Zinc</keyword>
<feature type="chain" id="PRO_0000075823" description="Prickle planar cell polarity protein 3">
    <location>
        <begin position="1"/>
        <end position="624"/>
    </location>
</feature>
<feature type="domain" description="PET" evidence="4">
    <location>
        <begin position="74"/>
        <end position="182"/>
    </location>
</feature>
<feature type="domain" description="LIM zinc-binding 1" evidence="3">
    <location>
        <begin position="184"/>
        <end position="249"/>
    </location>
</feature>
<feature type="domain" description="LIM zinc-binding 2" evidence="3">
    <location>
        <begin position="250"/>
        <end position="309"/>
    </location>
</feature>
<feature type="domain" description="LIM zinc-binding 3" evidence="3">
    <location>
        <begin position="310"/>
        <end position="373"/>
    </location>
</feature>
<feature type="region of interest" description="Disordered" evidence="5">
    <location>
        <begin position="1"/>
        <end position="26"/>
    </location>
</feature>
<feature type="region of interest" description="Disordered" evidence="5">
    <location>
        <begin position="371"/>
        <end position="617"/>
    </location>
</feature>
<feature type="compositionally biased region" description="Basic residues" evidence="5">
    <location>
        <begin position="1"/>
        <end position="12"/>
    </location>
</feature>
<feature type="compositionally biased region" description="Low complexity" evidence="5">
    <location>
        <begin position="383"/>
        <end position="409"/>
    </location>
</feature>
<feature type="compositionally biased region" description="Pro residues" evidence="5">
    <location>
        <begin position="447"/>
        <end position="458"/>
    </location>
</feature>
<feature type="compositionally biased region" description="Basic residues" evidence="5">
    <location>
        <begin position="509"/>
        <end position="541"/>
    </location>
</feature>
<feature type="compositionally biased region" description="Low complexity" evidence="5">
    <location>
        <begin position="545"/>
        <end position="564"/>
    </location>
</feature>
<feature type="compositionally biased region" description="Polar residues" evidence="5">
    <location>
        <begin position="587"/>
        <end position="601"/>
    </location>
</feature>
<feature type="modified residue" description="Phosphoserine" evidence="9">
    <location>
        <position position="475"/>
    </location>
</feature>
<feature type="modified residue" description="Phosphoserine" evidence="2">
    <location>
        <position position="491"/>
    </location>
</feature>
<feature type="sequence conflict" description="In Ref. 1; BAC29758." evidence="7" ref="1">
    <original>I</original>
    <variation>V</variation>
    <location>
        <position position="318"/>
    </location>
</feature>
<feature type="sequence conflict" description="In Ref. 1; BAC29758." evidence="7" ref="1">
    <original>Q</original>
    <variation>R</variation>
    <location>
        <position position="521"/>
    </location>
</feature>
<sequence length="624" mass="69727">MFARGSRRRRSGRAPPEAEDPARGQPCNSCREQCPGFLLHGWRKICQHCKCPREEHAVRTVPVDLERIMCRLISDFQRHSISDDDSGCASEEYAWVPPGLKPEQVYQFFSCLPEDKVPYVNSPGEKYRIKQLLHQLPPHDSEAQYCTALEEEEKKELRAFSQQRKRENLGRATVRIFPVTITGAICEECGKQIGGGDIAVFASRAGLGACWHPQCFVCTTCQELLVDLIYFYHAGKVYCGRHHAECLRPRCQACDEIIFSPECTEAEGRHWHMGHFCCFECEASLGGQRYVMRQSRPHCCACYEARHAEYCDGCGEHIGLDQGQMAYEGQHWHASDRCFCCSRCSRPLLGRPFLPRRGLIFCSRACSLGSETTAPGPGRRSWSAGTVTTPLTTSTASFSATEGTSETASKGTCTKAEPAAGPEEPSHFLRGAPHRHSMPELGLRSAPEPPTESPGHPAPHPDDNAFGRQSTPRVSFRDPLVSEGGPRRTLSAPPAQRRRPRSPPPRTPSCHHHHHHRRRRQRHRRRGSHHHHHHPGRHGHHRCDLGSGSDSGSCSSSPSSPSSESSEDDGFFLGERIPLPPHLCRPRTTQDTSTETFNSPAQPLVQESHPVMPRQTRDKNCIVA</sequence>